<comment type="function">
    <text>Required for the transposition of the insertion element.</text>
</comment>
<comment type="similarity">
    <text evidence="1">Belongs to the transposase mutator family.</text>
</comment>
<name>TRA3_RHIME</name>
<dbReference type="EMBL" id="M60971">
    <property type="protein sequence ID" value="AAA98142.1"/>
    <property type="molecule type" value="Genomic_DNA"/>
</dbReference>
<dbReference type="EMBL" id="X63715">
    <property type="protein sequence ID" value="CAA45248.1"/>
    <property type="molecule type" value="Genomic_DNA"/>
</dbReference>
<dbReference type="EMBL" id="AL591688">
    <property type="protein sequence ID" value="CAC41551.1"/>
    <property type="molecule type" value="Genomic_DNA"/>
</dbReference>
<dbReference type="EMBL" id="AL591688">
    <property type="protein sequence ID" value="CAC46601.1"/>
    <property type="molecule type" value="Genomic_DNA"/>
</dbReference>
<dbReference type="EMBL" id="AL591688">
    <property type="protein sequence ID" value="CAC47558.1"/>
    <property type="molecule type" value="Genomic_DNA"/>
</dbReference>
<dbReference type="EMBL" id="AE006469">
    <property type="protein sequence ID" value="AAK64863.1"/>
    <property type="molecule type" value="Genomic_DNA"/>
</dbReference>
<dbReference type="EMBL" id="AE006469">
    <property type="protein sequence ID" value="AAK64898.1"/>
    <property type="molecule type" value="Genomic_DNA"/>
</dbReference>
<dbReference type="EMBL" id="AE006469">
    <property type="protein sequence ID" value="AAK65013.1"/>
    <property type="molecule type" value="Genomic_DNA"/>
</dbReference>
<dbReference type="EMBL" id="AE006469">
    <property type="protein sequence ID" value="AAK65400.1"/>
    <property type="molecule type" value="Genomic_DNA"/>
</dbReference>
<dbReference type="PIR" id="A42727">
    <property type="entry name" value="A42727"/>
</dbReference>
<dbReference type="PIR" id="C95306">
    <property type="entry name" value="C95306"/>
</dbReference>
<dbReference type="PIR" id="E95287">
    <property type="entry name" value="E95287"/>
</dbReference>
<dbReference type="PIR" id="F95354">
    <property type="entry name" value="F95354"/>
</dbReference>
<dbReference type="PIR" id="H95291">
    <property type="entry name" value="H95291"/>
</dbReference>
<dbReference type="PIR" id="S24759">
    <property type="entry name" value="S24759"/>
</dbReference>
<dbReference type="RefSeq" id="NP_384270.1">
    <property type="nucleotide sequence ID" value="NC_003047.1"/>
</dbReference>
<dbReference type="RefSeq" id="NP_386128.1">
    <property type="nucleotide sequence ID" value="NC_003047.1"/>
</dbReference>
<dbReference type="RefSeq" id="NP_387085.1">
    <property type="nucleotide sequence ID" value="NC_003047.1"/>
</dbReference>
<dbReference type="RefSeq" id="NP_435451.1">
    <property type="nucleotide sequence ID" value="NC_003037.1"/>
</dbReference>
<dbReference type="RefSeq" id="NP_435486.1">
    <property type="nucleotide sequence ID" value="NC_003037.1"/>
</dbReference>
<dbReference type="RefSeq" id="NP_435601.1">
    <property type="nucleotide sequence ID" value="NC_003037.1"/>
</dbReference>
<dbReference type="RefSeq" id="NP_435988.1">
    <property type="nucleotide sequence ID" value="NC_003037.1"/>
</dbReference>
<dbReference type="RefSeq" id="WP_010967204.1">
    <property type="nucleotide sequence ID" value="NC_003047.1"/>
</dbReference>
<dbReference type="RefSeq" id="YP_006962579.1">
    <property type="nucleotide sequence ID" value="NC_019313.1"/>
</dbReference>
<dbReference type="RefSeq" id="YP_006962861.1">
    <property type="nucleotide sequence ID" value="NC_019313.1"/>
</dbReference>
<dbReference type="SMR" id="P80011"/>
<dbReference type="EnsemblBacteria" id="AAK64863">
    <property type="protein sequence ID" value="AAK64863"/>
    <property type="gene ID" value="SMa0384"/>
</dbReference>
<dbReference type="EnsemblBacteria" id="AAK64898">
    <property type="protein sequence ID" value="AAK64898"/>
    <property type="gene ID" value="SMa0461"/>
</dbReference>
<dbReference type="EnsemblBacteria" id="AAK65013">
    <property type="protein sequence ID" value="AAK65013"/>
    <property type="gene ID" value="SMa0673"/>
</dbReference>
<dbReference type="EnsemblBacteria" id="AAK65400">
    <property type="protein sequence ID" value="AAK65400"/>
    <property type="gene ID" value="SMa1356"/>
</dbReference>
<dbReference type="EnsemblBacteria" id="CAC41551">
    <property type="protein sequence ID" value="CAC41551"/>
    <property type="gene ID" value="SMc02839"/>
</dbReference>
<dbReference type="EnsemblBacteria" id="CAC46601">
    <property type="protein sequence ID" value="CAC46601"/>
    <property type="gene ID" value="SMc04195"/>
</dbReference>
<dbReference type="EnsemblBacteria" id="CAC47558">
    <property type="protein sequence ID" value="CAC47558"/>
    <property type="gene ID" value="SMc03114"/>
</dbReference>
<dbReference type="KEGG" id="sme:SMa0384"/>
<dbReference type="KEGG" id="sme:SMa0461"/>
<dbReference type="KEGG" id="sme:SMa0673"/>
<dbReference type="KEGG" id="sme:SMa1356"/>
<dbReference type="KEGG" id="sme:SMc02839"/>
<dbReference type="KEGG" id="sme:SMc03114"/>
<dbReference type="KEGG" id="sme:SMc04195"/>
<dbReference type="PATRIC" id="fig|266834.11.peg.1525"/>
<dbReference type="eggNOG" id="COG3328">
    <property type="taxonomic scope" value="Bacteria"/>
</dbReference>
<dbReference type="HOGENOM" id="CLU_036805_2_0_5"/>
<dbReference type="OrthoDB" id="9793302at2"/>
<dbReference type="Proteomes" id="UP000001976">
    <property type="component" value="Chromosome"/>
</dbReference>
<dbReference type="Proteomes" id="UP000001976">
    <property type="component" value="Plasmid pSymA"/>
</dbReference>
<dbReference type="GO" id="GO:0003677">
    <property type="term" value="F:DNA binding"/>
    <property type="evidence" value="ECO:0007669"/>
    <property type="project" value="UniProtKB-KW"/>
</dbReference>
<dbReference type="GO" id="GO:0004803">
    <property type="term" value="F:transposase activity"/>
    <property type="evidence" value="ECO:0007669"/>
    <property type="project" value="InterPro"/>
</dbReference>
<dbReference type="GO" id="GO:0006313">
    <property type="term" value="P:DNA transposition"/>
    <property type="evidence" value="ECO:0007669"/>
    <property type="project" value="InterPro"/>
</dbReference>
<dbReference type="InterPro" id="IPR001207">
    <property type="entry name" value="Transposase_mutator"/>
</dbReference>
<dbReference type="NCBIfam" id="NF033543">
    <property type="entry name" value="transpos_IS256"/>
    <property type="match status" value="1"/>
</dbReference>
<dbReference type="PANTHER" id="PTHR33217:SF5">
    <property type="entry name" value="MUTATOR FAMILY TRANSPOSASE"/>
    <property type="match status" value="1"/>
</dbReference>
<dbReference type="PANTHER" id="PTHR33217">
    <property type="entry name" value="TRANSPOSASE FOR INSERTION SEQUENCE ELEMENT IS1081"/>
    <property type="match status" value="1"/>
</dbReference>
<dbReference type="Pfam" id="PF00872">
    <property type="entry name" value="Transposase_mut"/>
    <property type="match status" value="1"/>
</dbReference>
<dbReference type="PROSITE" id="PS01007">
    <property type="entry name" value="TRANSPOSASE_MUTATOR"/>
    <property type="match status" value="1"/>
</dbReference>
<accession>P80011</accession>
<geneLocation type="plasmid">
    <name>pSymA</name>
    <name>megaplasmid 1</name>
</geneLocation>
<keyword id="KW-0233">DNA recombination</keyword>
<keyword id="KW-0238">DNA-binding</keyword>
<keyword id="KW-0614">Plasmid</keyword>
<keyword id="KW-1185">Reference proteome</keyword>
<keyword id="KW-0814">Transposable element</keyword>
<keyword id="KW-0815">Transposition</keyword>
<sequence length="400" mass="45556">MAIEKELLDQLLAGRDPSEVFGKDGLLDDLKKALSERILNAELDDHLDVERLEGGPANRRNGSSKKTVLTGTSKMTLTIPRDRAGTFDPKLIARYQRRFPDFDDKIISMYARGMTVREIQGHLEELYGIDVSPDLISAVTDTVLEAVGEWQNRPLELCYPLVFFDAIRVKIRDEGFVRNKAVYVALAVLADGSKEILGLWIEQTEGAKFWLRVMNELKNRGCQDILIAVVDGLKGFPEAITAVFPQTIVQTCIVHLIRHSLEFVSYKDRRTVVPALRAIYRARDAEAGLKALEAFEEGYWGQKYPAIAQSWRRNWEHVVPFFAFPEGVRRIIYTTNAIEALNSKLRRAVRSRGHFPGDEAAMKLLYLVLNNAAEQWKRAPREWVEAKTQFAVIFGERFFN</sequence>
<gene>
    <name type="ordered locus">R00164</name>
    <name type="ORF">SMc02839</name>
</gene>
<gene>
    <name type="ordered locus">R02022</name>
    <name type="ORF">SMc04195</name>
</gene>
<gene>
    <name type="ordered locus">R02979</name>
    <name type="ORF">SMc03114</name>
</gene>
<gene>
    <name type="ordered locus">RA0205</name>
    <name type="ORF">SMa0384</name>
</gene>
<gene>
    <name type="ordered locus">RA0240</name>
    <name type="ORF">SMa0461</name>
</gene>
<gene>
    <name type="ordered locus">RA0355</name>
    <name type="ORF">SMa0673</name>
</gene>
<gene>
    <name type="ordered locus">RA0742</name>
    <name type="ORF">SMa1356</name>
</gene>
<feature type="chain" id="PRO_0000211352" description="Transposase for insertion sequence element ISRM3">
    <location>
        <begin position="1"/>
        <end position="400"/>
    </location>
</feature>
<feature type="sequence variant" description="In strain: GR4.">
    <original>A</original>
    <variation>V</variation>
    <location>
        <position position="13"/>
    </location>
</feature>
<proteinExistence type="inferred from homology"/>
<organism>
    <name type="scientific">Rhizobium meliloti (strain 1021)</name>
    <name type="common">Ensifer meliloti</name>
    <name type="synonym">Sinorhizobium meliloti</name>
    <dbReference type="NCBI Taxonomy" id="266834"/>
    <lineage>
        <taxon>Bacteria</taxon>
        <taxon>Pseudomonadati</taxon>
        <taxon>Pseudomonadota</taxon>
        <taxon>Alphaproteobacteria</taxon>
        <taxon>Hyphomicrobiales</taxon>
        <taxon>Rhizobiaceae</taxon>
        <taxon>Sinorhizobium/Ensifer group</taxon>
        <taxon>Sinorhizobium</taxon>
    </lineage>
</organism>
<reference key="1">
    <citation type="journal article" date="1991" name="J. Bacteriol.">
        <title>Identification and nucleotide sequence of Rhizobium meliloti insertion sequence ISRm3: similarity between the putative transposase encoded by ISRm3 and those encoded by Staphylococcus aureus IS256 and Thiobacillus ferrooxidans IST2.</title>
        <authorList>
            <person name="Wheatcroft R."/>
            <person name="Laberge S."/>
        </authorList>
    </citation>
    <scope>NUCLEOTIDE SEQUENCE [GENOMIC DNA]</scope>
    <source>
        <strain>102F70</strain>
    </source>
</reference>
<reference key="2">
    <citation type="journal article" date="1992" name="Plant Mol. Biol.">
        <title>Nucleotide sequence of Rhizobium meliloti GR4 insertion sequence ISRm3 linked to the nodulation competitiveness locus nfe.</title>
        <authorList>
            <person name="Soto M.J."/>
            <person name="Zorzano A."/>
            <person name="Olivares J."/>
            <person name="Toro N."/>
        </authorList>
    </citation>
    <scope>NUCLEOTIDE SEQUENCE [GENOMIC DNA]</scope>
    <source>
        <strain>GR4</strain>
    </source>
</reference>
<reference key="3">
    <citation type="journal article" date="2001" name="Proc. Natl. Acad. Sci. U.S.A.">
        <title>Analysis of the chromosome sequence of the legume symbiont Sinorhizobium meliloti strain 1021.</title>
        <authorList>
            <person name="Capela D."/>
            <person name="Barloy-Hubler F."/>
            <person name="Gouzy J."/>
            <person name="Bothe G."/>
            <person name="Ampe F."/>
            <person name="Batut J."/>
            <person name="Boistard P."/>
            <person name="Becker A."/>
            <person name="Boutry M."/>
            <person name="Cadieu E."/>
            <person name="Dreano S."/>
            <person name="Gloux S."/>
            <person name="Godrie T."/>
            <person name="Goffeau A."/>
            <person name="Kahn D."/>
            <person name="Kiss E."/>
            <person name="Lelaure V."/>
            <person name="Masuy D."/>
            <person name="Pohl T."/>
            <person name="Portetelle D."/>
            <person name="Puehler A."/>
            <person name="Purnelle B."/>
            <person name="Ramsperger U."/>
            <person name="Renard C."/>
            <person name="Thebault P."/>
            <person name="Vandenbol M."/>
            <person name="Weidner S."/>
            <person name="Galibert F."/>
        </authorList>
    </citation>
    <scope>NUCLEOTIDE SEQUENCE [LARGE SCALE GENOMIC DNA] (R00164; R02022 AND R02979)</scope>
    <source>
        <strain>1021</strain>
    </source>
</reference>
<reference key="4">
    <citation type="journal article" date="2001" name="Proc. Natl. Acad. Sci. U.S.A.">
        <title>Nucleotide sequence and predicted functions of the entire Sinorhizobium meliloti pSymA megaplasmid.</title>
        <authorList>
            <person name="Barnett M.J."/>
            <person name="Fisher R.F."/>
            <person name="Jones T."/>
            <person name="Komp C."/>
            <person name="Abola A.P."/>
            <person name="Barloy-Hubler F."/>
            <person name="Bowser L."/>
            <person name="Capela D."/>
            <person name="Galibert F."/>
            <person name="Gouzy J."/>
            <person name="Gurjal M."/>
            <person name="Hong A."/>
            <person name="Huizar L."/>
            <person name="Hyman R.W."/>
            <person name="Kahn D."/>
            <person name="Kahn M.L."/>
            <person name="Kalman S."/>
            <person name="Keating D.H."/>
            <person name="Palm C."/>
            <person name="Peck M.C."/>
            <person name="Surzycki R."/>
            <person name="Wells D.H."/>
            <person name="Yeh K.-C."/>
            <person name="Davis R.W."/>
            <person name="Federspiel N.A."/>
            <person name="Long S.R."/>
        </authorList>
    </citation>
    <scope>NUCLEOTIDE SEQUENCE [LARGE SCALE GENOMIC DNA] (RA0205; RA0240; RA0355 AND RA0742)</scope>
    <source>
        <strain>1021</strain>
        <plasmid>pSymA (megaplasmid 1)</plasmid>
    </source>
</reference>
<reference key="5">
    <citation type="journal article" date="2001" name="Science">
        <title>The composite genome of the legume symbiont Sinorhizobium meliloti.</title>
        <authorList>
            <person name="Galibert F."/>
            <person name="Finan T.M."/>
            <person name="Long S.R."/>
            <person name="Puehler A."/>
            <person name="Abola P."/>
            <person name="Ampe F."/>
            <person name="Barloy-Hubler F."/>
            <person name="Barnett M.J."/>
            <person name="Becker A."/>
            <person name="Boistard P."/>
            <person name="Bothe G."/>
            <person name="Boutry M."/>
            <person name="Bowser L."/>
            <person name="Buhrmester J."/>
            <person name="Cadieu E."/>
            <person name="Capela D."/>
            <person name="Chain P."/>
            <person name="Cowie A."/>
            <person name="Davis R.W."/>
            <person name="Dreano S."/>
            <person name="Federspiel N.A."/>
            <person name="Fisher R.F."/>
            <person name="Gloux S."/>
            <person name="Godrie T."/>
            <person name="Goffeau A."/>
            <person name="Golding B."/>
            <person name="Gouzy J."/>
            <person name="Gurjal M."/>
            <person name="Hernandez-Lucas I."/>
            <person name="Hong A."/>
            <person name="Huizar L."/>
            <person name="Hyman R.W."/>
            <person name="Jones T."/>
            <person name="Kahn D."/>
            <person name="Kahn M.L."/>
            <person name="Kalman S."/>
            <person name="Keating D.H."/>
            <person name="Kiss E."/>
            <person name="Komp C."/>
            <person name="Lelaure V."/>
            <person name="Masuy D."/>
            <person name="Palm C."/>
            <person name="Peck M.C."/>
            <person name="Pohl T.M."/>
            <person name="Portetelle D."/>
            <person name="Purnelle B."/>
            <person name="Ramsperger U."/>
            <person name="Surzycki R."/>
            <person name="Thebault P."/>
            <person name="Vandenbol M."/>
            <person name="Vorhoelter F.J."/>
            <person name="Weidner S."/>
            <person name="Wells D.H."/>
            <person name="Wong K."/>
            <person name="Yeh K.-C."/>
            <person name="Batut J."/>
        </authorList>
    </citation>
    <scope>NUCLEOTIDE SEQUENCE [LARGE SCALE GENOMIC DNA]</scope>
    <source>
        <strain>1021</strain>
    </source>
</reference>
<evidence type="ECO:0000305" key="1"/>
<protein>
    <recommendedName>
        <fullName>Transposase for insertion sequence element ISRM3</fullName>
    </recommendedName>
</protein>